<evidence type="ECO:0000269" key="1">
    <source>
    </source>
</evidence>
<evidence type="ECO:0000269" key="2">
    <source>
    </source>
</evidence>
<evidence type="ECO:0000303" key="3">
    <source>
    </source>
</evidence>
<evidence type="ECO:0000305" key="4"/>
<evidence type="ECO:0000305" key="5">
    <source>
    </source>
</evidence>
<protein>
    <recommendedName>
        <fullName evidence="3">Oxidoreductase ptaF</fullName>
        <ecNumber evidence="5">1.-.-.-</ecNumber>
    </recommendedName>
    <alternativeName>
        <fullName evidence="3">Pestheic acid biosynthesis cluster protein F</fullName>
    </alternativeName>
</protein>
<name>PTAF_PESFW</name>
<dbReference type="EC" id="1.-.-.-" evidence="5"/>
<dbReference type="EMBL" id="KC145148">
    <property type="protein sequence ID" value="AGO59035.1"/>
    <property type="molecule type" value="Genomic_DNA"/>
</dbReference>
<dbReference type="EMBL" id="KI912116">
    <property type="protein sequence ID" value="ETS76955.1"/>
    <property type="status" value="ALT_SEQ"/>
    <property type="molecule type" value="Genomic_DNA"/>
</dbReference>
<dbReference type="RefSeq" id="XP_007837601.1">
    <property type="nucleotide sequence ID" value="XM_007839410.1"/>
</dbReference>
<dbReference type="SMR" id="A0A067XNH7"/>
<dbReference type="STRING" id="1229662.A0A067XNH7"/>
<dbReference type="GeneID" id="19275842"/>
<dbReference type="KEGG" id="pfy:PFICI_10829"/>
<dbReference type="eggNOG" id="ENOG502SM0C">
    <property type="taxonomic scope" value="Eukaryota"/>
</dbReference>
<dbReference type="InParanoid" id="A0A067XNH7"/>
<dbReference type="OrthoDB" id="10254221at2759"/>
<dbReference type="Proteomes" id="UP000030651">
    <property type="component" value="Unassembled WGS sequence"/>
</dbReference>
<dbReference type="GO" id="GO:0004497">
    <property type="term" value="F:monooxygenase activity"/>
    <property type="evidence" value="ECO:0007669"/>
    <property type="project" value="UniProtKB-KW"/>
</dbReference>
<dbReference type="Gene3D" id="3.40.50.720">
    <property type="entry name" value="NAD(P)-binding Rossmann-like Domain"/>
    <property type="match status" value="1"/>
</dbReference>
<dbReference type="InterPro" id="IPR016040">
    <property type="entry name" value="NAD(P)-bd_dom"/>
</dbReference>
<dbReference type="InterPro" id="IPR036291">
    <property type="entry name" value="NAD(P)-bd_dom_sf"/>
</dbReference>
<dbReference type="PANTHER" id="PTHR15020">
    <property type="entry name" value="FLAVIN REDUCTASE-RELATED"/>
    <property type="match status" value="1"/>
</dbReference>
<dbReference type="PANTHER" id="PTHR15020:SF37">
    <property type="entry name" value="OXIDOREDUCTASE MDPK"/>
    <property type="match status" value="1"/>
</dbReference>
<dbReference type="Pfam" id="PF13460">
    <property type="entry name" value="NAD_binding_10"/>
    <property type="match status" value="1"/>
</dbReference>
<dbReference type="SUPFAM" id="SSF51735">
    <property type="entry name" value="NAD(P)-binding Rossmann-fold domains"/>
    <property type="match status" value="1"/>
</dbReference>
<keyword id="KW-0503">Monooxygenase</keyword>
<keyword id="KW-0560">Oxidoreductase</keyword>
<keyword id="KW-1185">Reference proteome</keyword>
<sequence length="261" mass="28284">MSRYAILGSTGNCGTALIENVLDSSMTEVHAFCRNQEKLERLVPRVISDARVKVFVGGIGDTETLAACLHGCNAVFLCITTNDNVPGCRVAQDTALGVVKVLERSRADGFLPMPKLVLLSSATIDDVLSRNTPWVLRSILLKSASHVYEDLRKTEILLRAEQDWLTTIFIKPGALSVDIQRGHALSLTDEDSPVSYLDLAAAMIEAVNDPQGRYDMRNVGVVNTHGRANFPSGTPLCIAVGLLSHFAPFLHPYLPSGTGPR</sequence>
<gene>
    <name evidence="3" type="primary">ptaF</name>
    <name type="ORF">PFICI_10829</name>
</gene>
<comment type="function">
    <text evidence="1">Oxidoreductase; part of the gene cluster that mediates the biosynthesis of pestheic acid, a diphenyl ether which is a biosynthetic precursor of the unique chloropupukeananes (PubMed:24302702). The biosynthesis initiates from condensation of acetate and malonate units catalyzed by the non-reducing PKS ptaA (PubMed:24302702). As the ptaA protein is TE/CLC domain-deficient, hydrolysis and Claisen cyclization of the polyketide could be catalyzed by ptaB containing a beta-lactamase domain (PubMed:24302702). The ptaB protein might hydrolyze the thioester bond between the ACP of ptaA and the intermediate to release atrochrysone carboxylic acid, which is spontaneously dehydrated to form endocrocin anthrone (PubMed:24302702). Endocrocin anthrone is then converted to endocrocin, catalyzed by the anthrone oxygenase ptaC (PubMed:24302702). Spontaneous decarboxylation of endocrocin occurs to generate emodin (PubMed:24302702). An O-methyltransferase (ptaH or ptaI) could methylate emodin to form physcion (PubMed:24302702). PtaJ could then catalyze the oxidative cleavage of physcion, and rotation of the intermediate could then afford desmethylisosulochrin (PubMed:24302702). PtaF, a putative NADH-dependent oxidoreductase, might also participate in the oxidative cleavage step (PubMed:24302702). Desmethylisosulochrin is then transformed by another O-methyltransferase (ptaH or ptaI) to form isosulochrin (PubMed:24302702). Chlorination of isosulochrin by ptaM in the cyclohexadienone B ring then produces chloroisosulochrin (PubMed:24302702). PtaE is responsible for the oxidative coupling reactions of both benzophenones isosulouchrin and chloroisosulochrin to RES-1214-1 and pestheic acid respectively, regardless of chlorination.</text>
</comment>
<comment type="pathway">
    <text evidence="5">Secondary metabolite biosynthesis.</text>
</comment>
<comment type="induction">
    <text evidence="2 5">The cluster is expressed in rice fermentation medium (PubMed:25623211). Three regulators are located in the cluster (ptaR1, ptaR2 and ptaR3), suggesting that the production of pestheic acid is controlled by a complex regulatory mechanism (PubMed:24302702).</text>
</comment>
<comment type="similarity">
    <text evidence="4">Belongs to the avfA family.</text>
</comment>
<comment type="sequence caution" evidence="4">
    <conflict type="erroneous gene model prediction">
        <sequence resource="EMBL-CDS" id="ETS76955"/>
    </conflict>
</comment>
<proteinExistence type="evidence at transcript level"/>
<organism>
    <name type="scientific">Pestalotiopsis fici (strain W106-1 / CGMCC3.15140)</name>
    <dbReference type="NCBI Taxonomy" id="1229662"/>
    <lineage>
        <taxon>Eukaryota</taxon>
        <taxon>Fungi</taxon>
        <taxon>Dikarya</taxon>
        <taxon>Ascomycota</taxon>
        <taxon>Pezizomycotina</taxon>
        <taxon>Sordariomycetes</taxon>
        <taxon>Xylariomycetidae</taxon>
        <taxon>Amphisphaeriales</taxon>
        <taxon>Sporocadaceae</taxon>
        <taxon>Pestalotiopsis</taxon>
    </lineage>
</organism>
<accession>A0A067XNH7</accession>
<accession>W3WSW6</accession>
<feature type="chain" id="PRO_0000443042" description="Oxidoreductase ptaF">
    <location>
        <begin position="1"/>
        <end position="261"/>
    </location>
</feature>
<reference key="1">
    <citation type="journal article" date="2014" name="ChemBioChem">
        <title>Identification of the first diphenyl ether gene cluster for pestheic acid biosynthesis in plant endophyte Pestalotiopsis fici.</title>
        <authorList>
            <person name="Xu X."/>
            <person name="Liu L."/>
            <person name="Zhang F."/>
            <person name="Wang W."/>
            <person name="Li J."/>
            <person name="Guo L."/>
            <person name="Che Y."/>
            <person name="Liu G."/>
        </authorList>
    </citation>
    <scope>NUCLEOTIDE SEQUENCE [GENOMIC DNA]</scope>
    <scope>FUNCTION</scope>
    <scope>INDUCTION</scope>
    <source>
        <strain>W106-1 / CGMCC3.15140</strain>
    </source>
</reference>
<reference key="2">
    <citation type="journal article" date="2015" name="BMC Genomics">
        <title>Genomic and transcriptomic analysis of the endophytic fungus Pestalotiopsis fici reveals its lifestyle and high potential for synthesis of natural products.</title>
        <authorList>
            <person name="Wang X."/>
            <person name="Zhang X."/>
            <person name="Liu L."/>
            <person name="Xiang M."/>
            <person name="Wang W."/>
            <person name="Sun X."/>
            <person name="Che Y."/>
            <person name="Guo L."/>
            <person name="Liu G."/>
            <person name="Guo L."/>
            <person name="Wang C."/>
            <person name="Yin W.B."/>
            <person name="Stadler M."/>
            <person name="Zhang X."/>
            <person name="Liu X."/>
        </authorList>
    </citation>
    <scope>NUCLEOTIDE SEQUENCE [LARGE SCALE GENOMIC DNA]</scope>
    <scope>INDUCTION</scope>
    <source>
        <strain>W106-1 / CGMCC3.15140</strain>
    </source>
</reference>